<evidence type="ECO:0000250" key="1">
    <source>
        <dbReference type="UniProtKB" id="Q9D7J9"/>
    </source>
</evidence>
<evidence type="ECO:0000255" key="2"/>
<evidence type="ECO:0000269" key="3">
    <source>
    </source>
</evidence>
<evidence type="ECO:0000269" key="4">
    <source>
    </source>
</evidence>
<evidence type="ECO:0000269" key="5">
    <source>
    </source>
</evidence>
<evidence type="ECO:0000269" key="6">
    <source>
    </source>
</evidence>
<evidence type="ECO:0000269" key="7">
    <source>
    </source>
</evidence>
<evidence type="ECO:0000269" key="8">
    <source ref="3"/>
</evidence>
<evidence type="ECO:0000269" key="9">
    <source ref="5"/>
</evidence>
<evidence type="ECO:0000303" key="10">
    <source>
    </source>
</evidence>
<evidence type="ECO:0000305" key="11"/>
<evidence type="ECO:0000312" key="12">
    <source>
        <dbReference type="HGNC" id="HGNC:23489"/>
    </source>
</evidence>
<evidence type="ECO:0007829" key="13">
    <source>
        <dbReference type="PDB" id="2VX2"/>
    </source>
</evidence>
<comment type="function">
    <text evidence="7">May play a role in fatty acid biosynthesis and insulin sensitivity.</text>
</comment>
<comment type="subcellular location">
    <subcellularLocation>
        <location evidence="11">Mitochondrion</location>
    </subcellularLocation>
</comment>
<comment type="alternative products">
    <event type="alternative splicing"/>
    <isoform>
        <id>Q96DC8-1</id>
        <name>1</name>
        <sequence type="displayed"/>
    </isoform>
    <isoform>
        <id>Q96DC8-2</id>
        <name>2</name>
        <sequence type="described" ref="VSP_033491"/>
    </isoform>
</comment>
<comment type="tissue specificity">
    <text evidence="6 7">Expressed in adipocytes (PubMed:31010960). Expressed in blood cells, with higher expression in patients with low coronary lesions (PubMed:27586541).</text>
</comment>
<comment type="similarity">
    <text evidence="11">Belongs to the enoyl-CoA hydratase/isomerase family.</text>
</comment>
<comment type="sequence caution" evidence="11">
    <conflict type="erroneous termination">
        <sequence resource="EMBL-CDS" id="BAB14928"/>
    </conflict>
    <text>Truncated C-terminus.</text>
</comment>
<accession>Q96DC8</accession>
<accession>Q53HR9</accession>
<accession>Q5W0J7</accession>
<accession>Q8WYY8</accession>
<accession>Q9BVL8</accession>
<accession>Q9H7G4</accession>
<name>ECHD3_HUMAN</name>
<protein>
    <recommendedName>
        <fullName evidence="11">Enoyl-CoA hydratase domain-containing protein 3, mitochondrial</fullName>
    </recommendedName>
</protein>
<organism>
    <name type="scientific">Homo sapiens</name>
    <name type="common">Human</name>
    <dbReference type="NCBI Taxonomy" id="9606"/>
    <lineage>
        <taxon>Eukaryota</taxon>
        <taxon>Metazoa</taxon>
        <taxon>Chordata</taxon>
        <taxon>Craniata</taxon>
        <taxon>Vertebrata</taxon>
        <taxon>Euteleostomi</taxon>
        <taxon>Mammalia</taxon>
        <taxon>Eutheria</taxon>
        <taxon>Euarchontoglires</taxon>
        <taxon>Primates</taxon>
        <taxon>Haplorrhini</taxon>
        <taxon>Catarrhini</taxon>
        <taxon>Hominidae</taxon>
        <taxon>Homo</taxon>
    </lineage>
</organism>
<feature type="transit peptide" description="Mitochondrion" evidence="2">
    <location>
        <begin position="1"/>
        <end position="17"/>
    </location>
</feature>
<feature type="chain" id="PRO_0000333215" description="Enoyl-CoA hydratase domain-containing protein 3, mitochondrial">
    <location>
        <begin position="18"/>
        <end position="303"/>
    </location>
</feature>
<feature type="modified residue" description="N6-succinyllysine" evidence="1">
    <location>
        <position position="110"/>
    </location>
</feature>
<feature type="splice variant" id="VSP_033491" description="In isoform 2." evidence="10">
    <location>
        <begin position="1"/>
        <end position="131"/>
    </location>
</feature>
<feature type="sequence variant" id="VAR_043126" description="In dbSNP:rs4750090." evidence="3 4 5 8 9">
    <original>A</original>
    <variation>T</variation>
    <location>
        <position position="69"/>
    </location>
</feature>
<feature type="sequence variant" id="VAR_043127" description="In dbSNP:rs7910140." evidence="3 4 5 8 9">
    <original>A</original>
    <variation>T</variation>
    <location>
        <position position="151"/>
    </location>
</feature>
<feature type="sequence variant" id="VAR_043128" description="In dbSNP:rs35986488.">
    <original>D</original>
    <variation>N</variation>
    <location>
        <position position="162"/>
    </location>
</feature>
<feature type="sequence conflict" description="In Ref. 6; AAH01091." evidence="11" ref="6">
    <original>C</original>
    <variation>F</variation>
    <location>
        <position position="17"/>
    </location>
</feature>
<feature type="sequence conflict" description="In Ref. 3; BAD96231." evidence="11" ref="3">
    <original>P</original>
    <variation>L</variation>
    <location>
        <position position="45"/>
    </location>
</feature>
<feature type="strand" evidence="13">
    <location>
        <begin position="47"/>
        <end position="53"/>
    </location>
</feature>
<feature type="strand" evidence="13">
    <location>
        <begin position="56"/>
        <end position="61"/>
    </location>
</feature>
<feature type="helix" evidence="13">
    <location>
        <begin position="64"/>
        <end position="66"/>
    </location>
</feature>
<feature type="helix" evidence="13">
    <location>
        <begin position="72"/>
        <end position="83"/>
    </location>
</feature>
<feature type="turn" evidence="13">
    <location>
        <begin position="84"/>
        <end position="87"/>
    </location>
</feature>
<feature type="strand" evidence="13">
    <location>
        <begin position="93"/>
        <end position="104"/>
    </location>
</feature>
<feature type="helix" evidence="13">
    <location>
        <begin position="114"/>
        <end position="116"/>
    </location>
</feature>
<feature type="helix" evidence="13">
    <location>
        <begin position="118"/>
        <end position="136"/>
    </location>
</feature>
<feature type="strand" evidence="13">
    <location>
        <begin position="142"/>
        <end position="146"/>
    </location>
</feature>
<feature type="strand" evidence="13">
    <location>
        <begin position="148"/>
        <end position="151"/>
    </location>
</feature>
<feature type="helix" evidence="13">
    <location>
        <begin position="153"/>
        <end position="160"/>
    </location>
</feature>
<feature type="strand" evidence="13">
    <location>
        <begin position="161"/>
        <end position="167"/>
    </location>
</feature>
<feature type="strand" evidence="13">
    <location>
        <begin position="171"/>
        <end position="173"/>
    </location>
</feature>
<feature type="helix" evidence="13">
    <location>
        <begin position="176"/>
        <end position="179"/>
    </location>
</feature>
<feature type="helix" evidence="13">
    <location>
        <begin position="184"/>
        <end position="191"/>
    </location>
</feature>
<feature type="helix" evidence="13">
    <location>
        <begin position="196"/>
        <end position="205"/>
    </location>
</feature>
<feature type="helix" evidence="13">
    <location>
        <begin position="211"/>
        <end position="216"/>
    </location>
</feature>
<feature type="strand" evidence="13">
    <location>
        <begin position="221"/>
        <end position="224"/>
    </location>
</feature>
<feature type="helix" evidence="13">
    <location>
        <begin position="226"/>
        <end position="228"/>
    </location>
</feature>
<feature type="helix" evidence="13">
    <location>
        <begin position="229"/>
        <end position="241"/>
    </location>
</feature>
<feature type="helix" evidence="13">
    <location>
        <begin position="245"/>
        <end position="258"/>
    </location>
</feature>
<feature type="helix" evidence="13">
    <location>
        <begin position="263"/>
        <end position="278"/>
    </location>
</feature>
<feature type="helix" evidence="13">
    <location>
        <begin position="281"/>
        <end position="291"/>
    </location>
</feature>
<dbReference type="EMBL" id="AK024562">
    <property type="protein sequence ID" value="BAB14928.1"/>
    <property type="status" value="ALT_SEQ"/>
    <property type="molecule type" value="mRNA"/>
</dbReference>
<dbReference type="EMBL" id="AK290902">
    <property type="protein sequence ID" value="BAF83591.1"/>
    <property type="molecule type" value="mRNA"/>
</dbReference>
<dbReference type="EMBL" id="AF275677">
    <property type="protein sequence ID" value="AAG24387.1"/>
    <property type="molecule type" value="mRNA"/>
</dbReference>
<dbReference type="EMBL" id="AF289604">
    <property type="protein sequence ID" value="AAL55788.1"/>
    <property type="molecule type" value="mRNA"/>
</dbReference>
<dbReference type="EMBL" id="AK222511">
    <property type="protein sequence ID" value="BAD96231.1"/>
    <property type="molecule type" value="mRNA"/>
</dbReference>
<dbReference type="EMBL" id="AL138898">
    <property type="status" value="NOT_ANNOTATED_CDS"/>
    <property type="molecule type" value="Genomic_DNA"/>
</dbReference>
<dbReference type="EMBL" id="CH471072">
    <property type="protein sequence ID" value="EAW86341.1"/>
    <property type="molecule type" value="Genomic_DNA"/>
</dbReference>
<dbReference type="EMBL" id="CH471072">
    <property type="protein sequence ID" value="EAW86342.1"/>
    <property type="molecule type" value="Genomic_DNA"/>
</dbReference>
<dbReference type="EMBL" id="BC001091">
    <property type="protein sequence ID" value="AAH01091.1"/>
    <property type="molecule type" value="mRNA"/>
</dbReference>
<dbReference type="EMBL" id="BC009617">
    <property type="protein sequence ID" value="AAH09617.1"/>
    <property type="molecule type" value="mRNA"/>
</dbReference>
<dbReference type="CCDS" id="CCDS7084.1">
    <molecule id="Q96DC8-1"/>
</dbReference>
<dbReference type="RefSeq" id="NP_078969.2">
    <molecule id="Q96DC8-1"/>
    <property type="nucleotide sequence ID" value="NM_024693.4"/>
</dbReference>
<dbReference type="PDB" id="2VX2">
    <property type="method" value="X-ray"/>
    <property type="resolution" value="2.30 A"/>
    <property type="chains" value="A/B/C/D/E/F/G/H/I=37-300"/>
</dbReference>
<dbReference type="PDBsum" id="2VX2"/>
<dbReference type="SMR" id="Q96DC8"/>
<dbReference type="BioGRID" id="122858">
    <property type="interactions" value="24"/>
</dbReference>
<dbReference type="FunCoup" id="Q96DC8">
    <property type="interactions" value="442"/>
</dbReference>
<dbReference type="IntAct" id="Q96DC8">
    <property type="interactions" value="8"/>
</dbReference>
<dbReference type="STRING" id="9606.ENSP00000368517"/>
<dbReference type="GlyGen" id="Q96DC8">
    <property type="glycosylation" value="1 site"/>
</dbReference>
<dbReference type="iPTMnet" id="Q96DC8"/>
<dbReference type="PhosphoSitePlus" id="Q96DC8"/>
<dbReference type="SwissPalm" id="Q96DC8"/>
<dbReference type="BioMuta" id="ECHDC3"/>
<dbReference type="DMDM" id="311033376"/>
<dbReference type="REPRODUCTION-2DPAGE" id="IPI00256376"/>
<dbReference type="jPOST" id="Q96DC8"/>
<dbReference type="MassIVE" id="Q96DC8"/>
<dbReference type="PaxDb" id="9606-ENSP00000368517"/>
<dbReference type="PeptideAtlas" id="Q96DC8"/>
<dbReference type="ProteomicsDB" id="76276">
    <molecule id="Q96DC8-1"/>
</dbReference>
<dbReference type="ProteomicsDB" id="76277">
    <molecule id="Q96DC8-2"/>
</dbReference>
<dbReference type="Pumba" id="Q96DC8"/>
<dbReference type="Antibodypedia" id="24584">
    <property type="antibodies" value="33 antibodies from 14 providers"/>
</dbReference>
<dbReference type="DNASU" id="79746"/>
<dbReference type="Ensembl" id="ENST00000379215.9">
    <molecule id="Q96DC8-1"/>
    <property type="protein sequence ID" value="ENSP00000368517.4"/>
    <property type="gene ID" value="ENSG00000134463.15"/>
</dbReference>
<dbReference type="GeneID" id="79746"/>
<dbReference type="KEGG" id="hsa:79746"/>
<dbReference type="MANE-Select" id="ENST00000379215.9">
    <property type="protein sequence ID" value="ENSP00000368517.4"/>
    <property type="RefSeq nucleotide sequence ID" value="NM_024693.5"/>
    <property type="RefSeq protein sequence ID" value="NP_078969.3"/>
</dbReference>
<dbReference type="UCSC" id="uc001ikw.5">
    <molecule id="Q96DC8-1"/>
    <property type="organism name" value="human"/>
</dbReference>
<dbReference type="AGR" id="HGNC:23489"/>
<dbReference type="CTD" id="79746"/>
<dbReference type="DisGeNET" id="79746"/>
<dbReference type="GeneCards" id="ECHDC3"/>
<dbReference type="HGNC" id="HGNC:23489">
    <property type="gene designation" value="ECHDC3"/>
</dbReference>
<dbReference type="HPA" id="ENSG00000134463">
    <property type="expression patterns" value="Tissue enhanced (liver, skeletal muscle)"/>
</dbReference>
<dbReference type="MIM" id="620756">
    <property type="type" value="gene"/>
</dbReference>
<dbReference type="neXtProt" id="NX_Q96DC8"/>
<dbReference type="OpenTargets" id="ENSG00000134463"/>
<dbReference type="PharmGKB" id="PA134881215"/>
<dbReference type="VEuPathDB" id="HostDB:ENSG00000134463"/>
<dbReference type="eggNOG" id="KOG1682">
    <property type="taxonomic scope" value="Eukaryota"/>
</dbReference>
<dbReference type="GeneTree" id="ENSGT00940000157926"/>
<dbReference type="InParanoid" id="Q96DC8"/>
<dbReference type="OMA" id="SCDMVVC"/>
<dbReference type="OrthoDB" id="2139957at2759"/>
<dbReference type="PAN-GO" id="Q96DC8">
    <property type="GO annotations" value="2 GO annotations based on evolutionary models"/>
</dbReference>
<dbReference type="PhylomeDB" id="Q96DC8"/>
<dbReference type="TreeFam" id="TF313089"/>
<dbReference type="PathwayCommons" id="Q96DC8"/>
<dbReference type="SignaLink" id="Q96DC8"/>
<dbReference type="BioGRID-ORCS" id="79746">
    <property type="hits" value="17 hits in 1165 CRISPR screens"/>
</dbReference>
<dbReference type="ChiTaRS" id="ECHDC3">
    <property type="organism name" value="human"/>
</dbReference>
<dbReference type="EvolutionaryTrace" id="Q96DC8"/>
<dbReference type="GenomeRNAi" id="79746"/>
<dbReference type="Pharos" id="Q96DC8">
    <property type="development level" value="Tdark"/>
</dbReference>
<dbReference type="PRO" id="PR:Q96DC8"/>
<dbReference type="Proteomes" id="UP000005640">
    <property type="component" value="Chromosome 10"/>
</dbReference>
<dbReference type="RNAct" id="Q96DC8">
    <property type="molecule type" value="protein"/>
</dbReference>
<dbReference type="Bgee" id="ENSG00000134463">
    <property type="expression patterns" value="Expressed in right lobe of liver and 160 other cell types or tissues"/>
</dbReference>
<dbReference type="ExpressionAtlas" id="Q96DC8">
    <property type="expression patterns" value="baseline and differential"/>
</dbReference>
<dbReference type="GO" id="GO:0005739">
    <property type="term" value="C:mitochondrion"/>
    <property type="evidence" value="ECO:0006056"/>
    <property type="project" value="FlyBase"/>
</dbReference>
<dbReference type="GO" id="GO:0004300">
    <property type="term" value="F:enoyl-CoA hydratase activity"/>
    <property type="evidence" value="ECO:0000250"/>
    <property type="project" value="UniProtKB"/>
</dbReference>
<dbReference type="GO" id="GO:0016836">
    <property type="term" value="F:hydro-lyase activity"/>
    <property type="evidence" value="ECO:0000318"/>
    <property type="project" value="GO_Central"/>
</dbReference>
<dbReference type="GO" id="GO:0006631">
    <property type="term" value="P:fatty acid metabolic process"/>
    <property type="evidence" value="ECO:0000250"/>
    <property type="project" value="UniProtKB"/>
</dbReference>
<dbReference type="GO" id="GO:1900078">
    <property type="term" value="P:positive regulation of cellular response to insulin stimulus"/>
    <property type="evidence" value="ECO:0000315"/>
    <property type="project" value="UniProtKB"/>
</dbReference>
<dbReference type="CDD" id="cd06558">
    <property type="entry name" value="crotonase-like"/>
    <property type="match status" value="1"/>
</dbReference>
<dbReference type="Gene3D" id="3.90.226.10">
    <property type="entry name" value="2-enoyl-CoA Hydratase, Chain A, domain 1"/>
    <property type="match status" value="1"/>
</dbReference>
<dbReference type="Gene3D" id="1.10.12.10">
    <property type="entry name" value="Lyase 2-enoyl-coa Hydratase, Chain A, domain 2"/>
    <property type="match status" value="1"/>
</dbReference>
<dbReference type="InterPro" id="IPR029045">
    <property type="entry name" value="ClpP/crotonase-like_dom_sf"/>
</dbReference>
<dbReference type="InterPro" id="IPR001753">
    <property type="entry name" value="Enoyl-CoA_hydra/iso"/>
</dbReference>
<dbReference type="InterPro" id="IPR014748">
    <property type="entry name" value="Enoyl-CoA_hydra_C"/>
</dbReference>
<dbReference type="InterPro" id="IPR052377">
    <property type="entry name" value="Mitochondrial_ECH-domain"/>
</dbReference>
<dbReference type="NCBIfam" id="NF006008">
    <property type="entry name" value="PRK08139.1"/>
    <property type="match status" value="1"/>
</dbReference>
<dbReference type="PANTHER" id="PTHR43602">
    <property type="match status" value="1"/>
</dbReference>
<dbReference type="PANTHER" id="PTHR43602:SF1">
    <property type="entry name" value="ENOYL-COA HYDRATASE DOMAIN-CONTAINING PROTEIN 3, MITOCHONDRIAL"/>
    <property type="match status" value="1"/>
</dbReference>
<dbReference type="Pfam" id="PF00378">
    <property type="entry name" value="ECH_1"/>
    <property type="match status" value="1"/>
</dbReference>
<dbReference type="SUPFAM" id="SSF52096">
    <property type="entry name" value="ClpP/crotonase"/>
    <property type="match status" value="1"/>
</dbReference>
<reference key="1">
    <citation type="journal article" date="2004" name="Nat. Genet.">
        <title>Complete sequencing and characterization of 21,243 full-length human cDNAs.</title>
        <authorList>
            <person name="Ota T."/>
            <person name="Suzuki Y."/>
            <person name="Nishikawa T."/>
            <person name="Otsuki T."/>
            <person name="Sugiyama T."/>
            <person name="Irie R."/>
            <person name="Wakamatsu A."/>
            <person name="Hayashi K."/>
            <person name="Sato H."/>
            <person name="Nagai K."/>
            <person name="Kimura K."/>
            <person name="Makita H."/>
            <person name="Sekine M."/>
            <person name="Obayashi M."/>
            <person name="Nishi T."/>
            <person name="Shibahara T."/>
            <person name="Tanaka T."/>
            <person name="Ishii S."/>
            <person name="Yamamoto J."/>
            <person name="Saito K."/>
            <person name="Kawai Y."/>
            <person name="Isono Y."/>
            <person name="Nakamura Y."/>
            <person name="Nagahari K."/>
            <person name="Murakami K."/>
            <person name="Yasuda T."/>
            <person name="Iwayanagi T."/>
            <person name="Wagatsuma M."/>
            <person name="Shiratori A."/>
            <person name="Sudo H."/>
            <person name="Hosoiri T."/>
            <person name="Kaku Y."/>
            <person name="Kodaira H."/>
            <person name="Kondo H."/>
            <person name="Sugawara M."/>
            <person name="Takahashi M."/>
            <person name="Kanda K."/>
            <person name="Yokoi T."/>
            <person name="Furuya T."/>
            <person name="Kikkawa E."/>
            <person name="Omura Y."/>
            <person name="Abe K."/>
            <person name="Kamihara K."/>
            <person name="Katsuta N."/>
            <person name="Sato K."/>
            <person name="Tanikawa M."/>
            <person name="Yamazaki M."/>
            <person name="Ninomiya K."/>
            <person name="Ishibashi T."/>
            <person name="Yamashita H."/>
            <person name="Murakawa K."/>
            <person name="Fujimori K."/>
            <person name="Tanai H."/>
            <person name="Kimata M."/>
            <person name="Watanabe M."/>
            <person name="Hiraoka S."/>
            <person name="Chiba Y."/>
            <person name="Ishida S."/>
            <person name="Ono Y."/>
            <person name="Takiguchi S."/>
            <person name="Watanabe S."/>
            <person name="Yosida M."/>
            <person name="Hotuta T."/>
            <person name="Kusano J."/>
            <person name="Kanehori K."/>
            <person name="Takahashi-Fujii A."/>
            <person name="Hara H."/>
            <person name="Tanase T.-O."/>
            <person name="Nomura Y."/>
            <person name="Togiya S."/>
            <person name="Komai F."/>
            <person name="Hara R."/>
            <person name="Takeuchi K."/>
            <person name="Arita M."/>
            <person name="Imose N."/>
            <person name="Musashino K."/>
            <person name="Yuuki H."/>
            <person name="Oshima A."/>
            <person name="Sasaki N."/>
            <person name="Aotsuka S."/>
            <person name="Yoshikawa Y."/>
            <person name="Matsunawa H."/>
            <person name="Ichihara T."/>
            <person name="Shiohata N."/>
            <person name="Sano S."/>
            <person name="Moriya S."/>
            <person name="Momiyama H."/>
            <person name="Satoh N."/>
            <person name="Takami S."/>
            <person name="Terashima Y."/>
            <person name="Suzuki O."/>
            <person name="Nakagawa S."/>
            <person name="Senoh A."/>
            <person name="Mizoguchi H."/>
            <person name="Goto Y."/>
            <person name="Shimizu F."/>
            <person name="Wakebe H."/>
            <person name="Hishigaki H."/>
            <person name="Watanabe T."/>
            <person name="Sugiyama A."/>
            <person name="Takemoto M."/>
            <person name="Kawakami B."/>
            <person name="Yamazaki M."/>
            <person name="Watanabe K."/>
            <person name="Kumagai A."/>
            <person name="Itakura S."/>
            <person name="Fukuzumi Y."/>
            <person name="Fujimori Y."/>
            <person name="Komiyama M."/>
            <person name="Tashiro H."/>
            <person name="Tanigami A."/>
            <person name="Fujiwara T."/>
            <person name="Ono T."/>
            <person name="Yamada K."/>
            <person name="Fujii Y."/>
            <person name="Ozaki K."/>
            <person name="Hirao M."/>
            <person name="Ohmori Y."/>
            <person name="Kawabata A."/>
            <person name="Hikiji T."/>
            <person name="Kobatake N."/>
            <person name="Inagaki H."/>
            <person name="Ikema Y."/>
            <person name="Okamoto S."/>
            <person name="Okitani R."/>
            <person name="Kawakami T."/>
            <person name="Noguchi S."/>
            <person name="Itoh T."/>
            <person name="Shigeta K."/>
            <person name="Senba T."/>
            <person name="Matsumura K."/>
            <person name="Nakajima Y."/>
            <person name="Mizuno T."/>
            <person name="Morinaga M."/>
            <person name="Sasaki M."/>
            <person name="Togashi T."/>
            <person name="Oyama M."/>
            <person name="Hata H."/>
            <person name="Watanabe M."/>
            <person name="Komatsu T."/>
            <person name="Mizushima-Sugano J."/>
            <person name="Satoh T."/>
            <person name="Shirai Y."/>
            <person name="Takahashi Y."/>
            <person name="Nakagawa K."/>
            <person name="Okumura K."/>
            <person name="Nagase T."/>
            <person name="Nomura N."/>
            <person name="Kikuchi H."/>
            <person name="Masuho Y."/>
            <person name="Yamashita R."/>
            <person name="Nakai K."/>
            <person name="Yada T."/>
            <person name="Nakamura Y."/>
            <person name="Ohara O."/>
            <person name="Isogai T."/>
            <person name="Sugano S."/>
        </authorList>
    </citation>
    <scope>NUCLEOTIDE SEQUENCE [LARGE SCALE MRNA] (ISOFORM 1)</scope>
    <scope>VARIANTS THR-69 AND THR-151</scope>
    <source>
        <tissue>Adipose tissue</tissue>
        <tissue>Esophagus</tissue>
    </source>
</reference>
<reference key="2">
    <citation type="journal article" date="2004" name="Proc. Natl. Acad. Sci. U.S.A.">
        <title>Large-scale cDNA transfection screening for genes related to cancer development and progression.</title>
        <authorList>
            <person name="Wan D."/>
            <person name="Gong Y."/>
            <person name="Qin W."/>
            <person name="Zhang P."/>
            <person name="Li J."/>
            <person name="Wei L."/>
            <person name="Zhou X."/>
            <person name="Li H."/>
            <person name="Qiu X."/>
            <person name="Zhong F."/>
            <person name="He L."/>
            <person name="Yu J."/>
            <person name="Yao G."/>
            <person name="Jiang H."/>
            <person name="Qian L."/>
            <person name="Yu Y."/>
            <person name="Shu H."/>
            <person name="Chen X."/>
            <person name="Xu H."/>
            <person name="Guo M."/>
            <person name="Pan Z."/>
            <person name="Chen Y."/>
            <person name="Ge C."/>
            <person name="Yang S."/>
            <person name="Gu J."/>
        </authorList>
    </citation>
    <scope>NUCLEOTIDE SEQUENCE [LARGE SCALE MRNA] (ISOFORMS 1 AND 2)</scope>
    <scope>VARIANTS THR-69 AND THR-151</scope>
</reference>
<reference key="3">
    <citation type="submission" date="2005-04" db="EMBL/GenBank/DDBJ databases">
        <authorList>
            <person name="Suzuki Y."/>
            <person name="Sugano S."/>
            <person name="Totoki Y."/>
            <person name="Toyoda A."/>
            <person name="Takeda T."/>
            <person name="Sakaki Y."/>
            <person name="Tanaka A."/>
            <person name="Yokoyama S."/>
        </authorList>
    </citation>
    <scope>NUCLEOTIDE SEQUENCE [LARGE SCALE MRNA] (ISOFORM 1)</scope>
    <scope>VARIANTS THR-69 AND THR-151</scope>
    <source>
        <tissue>Adipose tissue</tissue>
    </source>
</reference>
<reference key="4">
    <citation type="journal article" date="2004" name="Nature">
        <title>The DNA sequence and comparative analysis of human chromosome 10.</title>
        <authorList>
            <person name="Deloukas P."/>
            <person name="Earthrowl M.E."/>
            <person name="Grafham D.V."/>
            <person name="Rubenfield M."/>
            <person name="French L."/>
            <person name="Steward C.A."/>
            <person name="Sims S.K."/>
            <person name="Jones M.C."/>
            <person name="Searle S."/>
            <person name="Scott C."/>
            <person name="Howe K."/>
            <person name="Hunt S.E."/>
            <person name="Andrews T.D."/>
            <person name="Gilbert J.G.R."/>
            <person name="Swarbreck D."/>
            <person name="Ashurst J.L."/>
            <person name="Taylor A."/>
            <person name="Battles J."/>
            <person name="Bird C.P."/>
            <person name="Ainscough R."/>
            <person name="Almeida J.P."/>
            <person name="Ashwell R.I.S."/>
            <person name="Ambrose K.D."/>
            <person name="Babbage A.K."/>
            <person name="Bagguley C.L."/>
            <person name="Bailey J."/>
            <person name="Banerjee R."/>
            <person name="Bates K."/>
            <person name="Beasley H."/>
            <person name="Bray-Allen S."/>
            <person name="Brown A.J."/>
            <person name="Brown J.Y."/>
            <person name="Burford D.C."/>
            <person name="Burrill W."/>
            <person name="Burton J."/>
            <person name="Cahill P."/>
            <person name="Camire D."/>
            <person name="Carter N.P."/>
            <person name="Chapman J.C."/>
            <person name="Clark S.Y."/>
            <person name="Clarke G."/>
            <person name="Clee C.M."/>
            <person name="Clegg S."/>
            <person name="Corby N."/>
            <person name="Coulson A."/>
            <person name="Dhami P."/>
            <person name="Dutta I."/>
            <person name="Dunn M."/>
            <person name="Faulkner L."/>
            <person name="Frankish A."/>
            <person name="Frankland J.A."/>
            <person name="Garner P."/>
            <person name="Garnett J."/>
            <person name="Gribble S."/>
            <person name="Griffiths C."/>
            <person name="Grocock R."/>
            <person name="Gustafson E."/>
            <person name="Hammond S."/>
            <person name="Harley J.L."/>
            <person name="Hart E."/>
            <person name="Heath P.D."/>
            <person name="Ho T.P."/>
            <person name="Hopkins B."/>
            <person name="Horne J."/>
            <person name="Howden P.J."/>
            <person name="Huckle E."/>
            <person name="Hynds C."/>
            <person name="Johnson C."/>
            <person name="Johnson D."/>
            <person name="Kana A."/>
            <person name="Kay M."/>
            <person name="Kimberley A.M."/>
            <person name="Kershaw J.K."/>
            <person name="Kokkinaki M."/>
            <person name="Laird G.K."/>
            <person name="Lawlor S."/>
            <person name="Lee H.M."/>
            <person name="Leongamornlert D.A."/>
            <person name="Laird G."/>
            <person name="Lloyd C."/>
            <person name="Lloyd D.M."/>
            <person name="Loveland J."/>
            <person name="Lovell J."/>
            <person name="McLaren S."/>
            <person name="McLay K.E."/>
            <person name="McMurray A."/>
            <person name="Mashreghi-Mohammadi M."/>
            <person name="Matthews L."/>
            <person name="Milne S."/>
            <person name="Nickerson T."/>
            <person name="Nguyen M."/>
            <person name="Overton-Larty E."/>
            <person name="Palmer S.A."/>
            <person name="Pearce A.V."/>
            <person name="Peck A.I."/>
            <person name="Pelan S."/>
            <person name="Phillimore B."/>
            <person name="Porter K."/>
            <person name="Rice C.M."/>
            <person name="Rogosin A."/>
            <person name="Ross M.T."/>
            <person name="Sarafidou T."/>
            <person name="Sehra H.K."/>
            <person name="Shownkeen R."/>
            <person name="Skuce C.D."/>
            <person name="Smith M."/>
            <person name="Standring L."/>
            <person name="Sycamore N."/>
            <person name="Tester J."/>
            <person name="Thorpe A."/>
            <person name="Torcasso W."/>
            <person name="Tracey A."/>
            <person name="Tromans A."/>
            <person name="Tsolas J."/>
            <person name="Wall M."/>
            <person name="Walsh J."/>
            <person name="Wang H."/>
            <person name="Weinstock K."/>
            <person name="West A.P."/>
            <person name="Willey D.L."/>
            <person name="Whitehead S.L."/>
            <person name="Wilming L."/>
            <person name="Wray P.W."/>
            <person name="Young L."/>
            <person name="Chen Y."/>
            <person name="Lovering R.C."/>
            <person name="Moschonas N.K."/>
            <person name="Siebert R."/>
            <person name="Fechtel K."/>
            <person name="Bentley D."/>
            <person name="Durbin R.M."/>
            <person name="Hubbard T."/>
            <person name="Doucette-Stamm L."/>
            <person name="Beck S."/>
            <person name="Smith D.R."/>
            <person name="Rogers J."/>
        </authorList>
    </citation>
    <scope>NUCLEOTIDE SEQUENCE [LARGE SCALE GENOMIC DNA]</scope>
</reference>
<reference key="5">
    <citation type="submission" date="2005-09" db="EMBL/GenBank/DDBJ databases">
        <authorList>
            <person name="Mural R.J."/>
            <person name="Istrail S."/>
            <person name="Sutton G.G."/>
            <person name="Florea L."/>
            <person name="Halpern A.L."/>
            <person name="Mobarry C.M."/>
            <person name="Lippert R."/>
            <person name="Walenz B."/>
            <person name="Shatkay H."/>
            <person name="Dew I."/>
            <person name="Miller J.R."/>
            <person name="Flanigan M.J."/>
            <person name="Edwards N.J."/>
            <person name="Bolanos R."/>
            <person name="Fasulo D."/>
            <person name="Halldorsson B.V."/>
            <person name="Hannenhalli S."/>
            <person name="Turner R."/>
            <person name="Yooseph S."/>
            <person name="Lu F."/>
            <person name="Nusskern D.R."/>
            <person name="Shue B.C."/>
            <person name="Zheng X.H."/>
            <person name="Zhong F."/>
            <person name="Delcher A.L."/>
            <person name="Huson D.H."/>
            <person name="Kravitz S.A."/>
            <person name="Mouchard L."/>
            <person name="Reinert K."/>
            <person name="Remington K.A."/>
            <person name="Clark A.G."/>
            <person name="Waterman M.S."/>
            <person name="Eichler E.E."/>
            <person name="Adams M.D."/>
            <person name="Hunkapiller M.W."/>
            <person name="Myers E.W."/>
            <person name="Venter J.C."/>
        </authorList>
    </citation>
    <scope>NUCLEOTIDE SEQUENCE [LARGE SCALE GENOMIC DNA]</scope>
    <scope>VARIANTS THR-69 AND THR-151</scope>
</reference>
<reference key="6">
    <citation type="journal article" date="2004" name="Genome Res.">
        <title>The status, quality, and expansion of the NIH full-length cDNA project: the Mammalian Gene Collection (MGC).</title>
        <authorList>
            <consortium name="The MGC Project Team"/>
        </authorList>
    </citation>
    <scope>NUCLEOTIDE SEQUENCE [LARGE SCALE MRNA] (ISOFORM 1)</scope>
    <scope>VARIANTS THR-69 AND THR-151</scope>
    <source>
        <tissue>Lung</tissue>
        <tissue>Placenta</tissue>
    </source>
</reference>
<reference key="7">
    <citation type="journal article" date="2011" name="BMC Syst. Biol.">
        <title>Initial characterization of the human central proteome.</title>
        <authorList>
            <person name="Burkard T.R."/>
            <person name="Planyavsky M."/>
            <person name="Kaupe I."/>
            <person name="Breitwieser F.P."/>
            <person name="Buerckstuemmer T."/>
            <person name="Bennett K.L."/>
            <person name="Superti-Furga G."/>
            <person name="Colinge J."/>
        </authorList>
    </citation>
    <scope>IDENTIFICATION BY MASS SPECTROMETRY [LARGE SCALE ANALYSIS]</scope>
</reference>
<reference key="8">
    <citation type="journal article" date="2014" name="J. Proteomics">
        <title>An enzyme assisted RP-RPLC approach for in-depth analysis of human liver phosphoproteome.</title>
        <authorList>
            <person name="Bian Y."/>
            <person name="Song C."/>
            <person name="Cheng K."/>
            <person name="Dong M."/>
            <person name="Wang F."/>
            <person name="Huang J."/>
            <person name="Sun D."/>
            <person name="Wang L."/>
            <person name="Ye M."/>
            <person name="Zou H."/>
        </authorList>
    </citation>
    <scope>IDENTIFICATION BY MASS SPECTROMETRY [LARGE SCALE ANALYSIS]</scope>
    <source>
        <tissue>Liver</tissue>
    </source>
</reference>
<reference key="9">
    <citation type="journal article" date="2016" name="Lipids Health Dis.">
        <title>The relationship of the oleic acid level and ECHDC3 mRNA expression with the extent of coronary lesion.</title>
        <authorList>
            <person name="Duarte M.K."/>
            <person name="de Araujo J.N."/>
            <person name="Duarte V.H."/>
            <person name="de Oliveira K.M."/>
            <person name="de Oliveira J.M."/>
            <person name="Carioca A.A."/>
            <person name="Bortolin R.H."/>
            <person name="Rezende A.A."/>
            <person name="Hirata M.H."/>
            <person name="Hirata R.D."/>
            <person name="Waitzberg D.L."/>
            <person name="Lima S.C."/>
            <person name="Luchessi A.D."/>
            <person name="Silbiger V.N."/>
        </authorList>
    </citation>
    <scope>TISSUE SPECIFICITY</scope>
</reference>
<reference key="10">
    <citation type="journal article" date="2019" name="Diabetes">
        <title>Genetic Regulation of enoyl-CoA hydratase Domain-Containing 3 in Adipose Tissue Determines Insulin Sensitivity in African Americans and Europeans.</title>
        <authorList>
            <person name="Sharma N.K."/>
            <person name="Chuang Key C.C."/>
            <person name="Civelek M."/>
            <person name="Wabitsch M."/>
            <person name="Comeau M.E."/>
            <person name="Langefeld C.D."/>
            <person name="Parks J.S."/>
            <person name="Das S.K."/>
        </authorList>
    </citation>
    <scope>FUNCTION</scope>
    <scope>TISSUE SPECIFICITY</scope>
</reference>
<reference key="11">
    <citation type="submission" date="2009-02" db="PDB data bank">
        <title>Crystal structure of human enoyl coenzyme A hydratase domain-containing protein 3 (ECHDC3).</title>
        <authorList>
            <consortium name="Structural genomics consortium (SGC)"/>
        </authorList>
    </citation>
    <scope>X-RAY CRYSTALLOGRAPHY (2.30 ANGSTROMS) OF 37-300</scope>
</reference>
<keyword id="KW-0002">3D-structure</keyword>
<keyword id="KW-0025">Alternative splicing</keyword>
<keyword id="KW-0276">Fatty acid metabolism</keyword>
<keyword id="KW-0443">Lipid metabolism</keyword>
<keyword id="KW-0496">Mitochondrion</keyword>
<keyword id="KW-1267">Proteomics identification</keyword>
<keyword id="KW-1185">Reference proteome</keyword>
<keyword id="KW-0809">Transit peptide</keyword>
<proteinExistence type="evidence at protein level"/>
<sequence length="303" mass="32634">MAAVAVLRAFGASGPMCLRRGPWAQLPARFCSRDPAGAGRRESEPRPTSARQLDGIRNIVLSNPKKRNALSLAMLKSLQSDILHDADSNDLKVIIISAEGPVFSSGHDLKELTEEQGRDYHAEVFQTCSKVMMHIRNHPVPVIAMVNGLAAAAGCQLVASCDIAVASDKSSFATPGVNVGLFCSTPGVALARAVPRKVALEMLFTGEPISAQEALLHGLLSKVVPEAELQEETMRIARKIASLSRPVVSLGKATFYKQLPQDLGTAYYLTSQAMVDNLALRDGQEGITAFLQKRKPVWSHEPV</sequence>
<gene>
    <name evidence="12" type="primary">ECHDC3</name>
    <name type="ORF">PP1494</name>
    <name type="ORF">PP8332</name>
</gene>